<proteinExistence type="inferred from homology"/>
<comment type="function">
    <text evidence="1">Catalyzes the irreversible cleavage of the glycosidic bond in both 5'-methylthioadenosine (MTA) and S-adenosylhomocysteine (SAH/AdoHcy) to adenine and the corresponding thioribose, 5'-methylthioribose and S-ribosylhomocysteine, respectively. Also cleaves 5'-deoxyadenosine, a toxic by-product of radical S-adenosylmethionine (SAM) enzymes, into 5-deoxyribose and adenine. Thus, is required for in vivo function of the radical SAM enzymes biotin synthase and lipoic acid synthase, that are inhibited by 5'-deoxyadenosine accumulation.</text>
</comment>
<comment type="catalytic activity">
    <reaction evidence="1">
        <text>S-adenosyl-L-homocysteine + H2O = S-(5-deoxy-D-ribos-5-yl)-L-homocysteine + adenine</text>
        <dbReference type="Rhea" id="RHEA:17805"/>
        <dbReference type="ChEBI" id="CHEBI:15377"/>
        <dbReference type="ChEBI" id="CHEBI:16708"/>
        <dbReference type="ChEBI" id="CHEBI:57856"/>
        <dbReference type="ChEBI" id="CHEBI:58195"/>
        <dbReference type="EC" id="3.2.2.9"/>
    </reaction>
</comment>
<comment type="catalytic activity">
    <reaction evidence="1">
        <text>S-methyl-5'-thioadenosine + H2O = 5-(methylsulfanyl)-D-ribose + adenine</text>
        <dbReference type="Rhea" id="RHEA:13617"/>
        <dbReference type="ChEBI" id="CHEBI:15377"/>
        <dbReference type="ChEBI" id="CHEBI:16708"/>
        <dbReference type="ChEBI" id="CHEBI:17509"/>
        <dbReference type="ChEBI" id="CHEBI:78440"/>
        <dbReference type="EC" id="3.2.2.9"/>
    </reaction>
</comment>
<comment type="catalytic activity">
    <reaction evidence="1">
        <text>5'-deoxyadenosine + H2O = 5-deoxy-D-ribose + adenine</text>
        <dbReference type="Rhea" id="RHEA:29859"/>
        <dbReference type="ChEBI" id="CHEBI:15377"/>
        <dbReference type="ChEBI" id="CHEBI:16708"/>
        <dbReference type="ChEBI" id="CHEBI:17319"/>
        <dbReference type="ChEBI" id="CHEBI:149540"/>
        <dbReference type="EC" id="3.2.2.9"/>
    </reaction>
    <physiologicalReaction direction="left-to-right" evidence="1">
        <dbReference type="Rhea" id="RHEA:29860"/>
    </physiologicalReaction>
</comment>
<comment type="pathway">
    <text evidence="1">Amino-acid biosynthesis; L-methionine biosynthesis via salvage pathway; S-methyl-5-thio-alpha-D-ribose 1-phosphate from S-methyl-5'-thioadenosine (hydrolase route): step 1/2.</text>
</comment>
<comment type="subunit">
    <text evidence="1">Homodimer.</text>
</comment>
<comment type="similarity">
    <text evidence="1">Belongs to the PNP/UDP phosphorylase family. MtnN subfamily.</text>
</comment>
<reference key="1">
    <citation type="journal article" date="2008" name="PLoS Genet.">
        <title>Complete genome sequence of the N2-fixing broad host range endophyte Klebsiella pneumoniae 342 and virulence predictions verified in mice.</title>
        <authorList>
            <person name="Fouts D.E."/>
            <person name="Tyler H.L."/>
            <person name="DeBoy R.T."/>
            <person name="Daugherty S."/>
            <person name="Ren Q."/>
            <person name="Badger J.H."/>
            <person name="Durkin A.S."/>
            <person name="Huot H."/>
            <person name="Shrivastava S."/>
            <person name="Kothari S."/>
            <person name="Dodson R.J."/>
            <person name="Mohamoud Y."/>
            <person name="Khouri H."/>
            <person name="Roesch L.F.W."/>
            <person name="Krogfelt K.A."/>
            <person name="Struve C."/>
            <person name="Triplett E.W."/>
            <person name="Methe B.A."/>
        </authorList>
    </citation>
    <scope>NUCLEOTIDE SEQUENCE [LARGE SCALE GENOMIC DNA]</scope>
    <source>
        <strain>342</strain>
    </source>
</reference>
<name>MTNN_KLEP3</name>
<protein>
    <recommendedName>
        <fullName evidence="1">5'-methylthioadenosine/S-adenosylhomocysteine nucleosidase</fullName>
        <shortName evidence="1">MTA/SAH nucleosidase</shortName>
        <shortName evidence="1">MTAN</shortName>
        <ecNumber evidence="1">3.2.2.9</ecNumber>
    </recommendedName>
    <alternativeName>
        <fullName evidence="1">5'-deoxyadenosine nucleosidase</fullName>
        <shortName evidence="1">DOA nucleosidase</shortName>
        <shortName evidence="1">dAdo nucleosidase</shortName>
    </alternativeName>
    <alternativeName>
        <fullName evidence="1">5'-methylthioadenosine nucleosidase</fullName>
        <shortName evidence="1">MTA nucleosidase</shortName>
    </alternativeName>
    <alternativeName>
        <fullName evidence="1">S-adenosylhomocysteine nucleosidase</fullName>
        <shortName evidence="1">AdoHcy nucleosidase</shortName>
        <shortName evidence="1">SAH nucleosidase</shortName>
        <shortName evidence="1">SRH nucleosidase</shortName>
    </alternativeName>
</protein>
<keyword id="KW-0028">Amino-acid biosynthesis</keyword>
<keyword id="KW-0378">Hydrolase</keyword>
<keyword id="KW-0486">Methionine biosynthesis</keyword>
<accession>B5Y1L0</accession>
<feature type="chain" id="PRO_1000187427" description="5'-methylthioadenosine/S-adenosylhomocysteine nucleosidase">
    <location>
        <begin position="1"/>
        <end position="232"/>
    </location>
</feature>
<feature type="active site" description="Proton acceptor" evidence="1">
    <location>
        <position position="12"/>
    </location>
</feature>
<feature type="active site" description="Proton donor" evidence="1">
    <location>
        <position position="197"/>
    </location>
</feature>
<feature type="binding site" evidence="1">
    <location>
        <position position="78"/>
    </location>
    <ligand>
        <name>substrate</name>
    </ligand>
</feature>
<feature type="binding site" evidence="1">
    <location>
        <position position="152"/>
    </location>
    <ligand>
        <name>substrate</name>
    </ligand>
</feature>
<feature type="binding site" evidence="1">
    <location>
        <begin position="173"/>
        <end position="174"/>
    </location>
    <ligand>
        <name>substrate</name>
    </ligand>
</feature>
<sequence>MKIGIIGAMEEEVTLLRDKIENRQTITIGGSEIYTGQLHGVDVALLKSGIGKVAAATGATLLLERCQPDVIINTGSAGGLAPTLKVGDIVVSDEARYHDADVTAFGYEYGQLPGCPAGFKADDKLVAAAEDCIKALDLNAVRGLIVSGDAFINGSVALAKIRHNFPQAIAVEMEATAIAHVCHNFKVPFVVVRAISDVADQQSHLSFEEFLAVAARQSTLMVENLVQNLARG</sequence>
<evidence type="ECO:0000255" key="1">
    <source>
        <dbReference type="HAMAP-Rule" id="MF_01684"/>
    </source>
</evidence>
<gene>
    <name evidence="1" type="primary">mtnN</name>
    <name type="ordered locus">KPK_4559</name>
</gene>
<organism>
    <name type="scientific">Klebsiella pneumoniae (strain 342)</name>
    <dbReference type="NCBI Taxonomy" id="507522"/>
    <lineage>
        <taxon>Bacteria</taxon>
        <taxon>Pseudomonadati</taxon>
        <taxon>Pseudomonadota</taxon>
        <taxon>Gammaproteobacteria</taxon>
        <taxon>Enterobacterales</taxon>
        <taxon>Enterobacteriaceae</taxon>
        <taxon>Klebsiella/Raoultella group</taxon>
        <taxon>Klebsiella</taxon>
        <taxon>Klebsiella pneumoniae complex</taxon>
    </lineage>
</organism>
<dbReference type="EC" id="3.2.2.9" evidence="1"/>
<dbReference type="EMBL" id="CP000964">
    <property type="protein sequence ID" value="ACI06817.1"/>
    <property type="molecule type" value="Genomic_DNA"/>
</dbReference>
<dbReference type="SMR" id="B5Y1L0"/>
<dbReference type="BindingDB" id="B5Y1L0"/>
<dbReference type="KEGG" id="kpe:KPK_4559"/>
<dbReference type="HOGENOM" id="CLU_031248_2_2_6"/>
<dbReference type="UniPathway" id="UPA00904">
    <property type="reaction ID" value="UER00871"/>
</dbReference>
<dbReference type="Proteomes" id="UP000001734">
    <property type="component" value="Chromosome"/>
</dbReference>
<dbReference type="GO" id="GO:0005829">
    <property type="term" value="C:cytosol"/>
    <property type="evidence" value="ECO:0007669"/>
    <property type="project" value="TreeGrafter"/>
</dbReference>
<dbReference type="GO" id="GO:0008782">
    <property type="term" value="F:adenosylhomocysteine nucleosidase activity"/>
    <property type="evidence" value="ECO:0007669"/>
    <property type="project" value="UniProtKB-UniRule"/>
</dbReference>
<dbReference type="GO" id="GO:0008930">
    <property type="term" value="F:methylthioadenosine nucleosidase activity"/>
    <property type="evidence" value="ECO:0007669"/>
    <property type="project" value="UniProtKB-UniRule"/>
</dbReference>
<dbReference type="GO" id="GO:0019509">
    <property type="term" value="P:L-methionine salvage from methylthioadenosine"/>
    <property type="evidence" value="ECO:0007669"/>
    <property type="project" value="UniProtKB-UniRule"/>
</dbReference>
<dbReference type="GO" id="GO:0019284">
    <property type="term" value="P:L-methionine salvage from S-adenosylmethionine"/>
    <property type="evidence" value="ECO:0007669"/>
    <property type="project" value="TreeGrafter"/>
</dbReference>
<dbReference type="GO" id="GO:0046124">
    <property type="term" value="P:purine deoxyribonucleoside catabolic process"/>
    <property type="evidence" value="ECO:0007669"/>
    <property type="project" value="UniProtKB-UniRule"/>
</dbReference>
<dbReference type="CDD" id="cd09008">
    <property type="entry name" value="MTAN"/>
    <property type="match status" value="1"/>
</dbReference>
<dbReference type="FunFam" id="3.40.50.1580:FF:000001">
    <property type="entry name" value="MTA/SAH nucleosidase family protein"/>
    <property type="match status" value="1"/>
</dbReference>
<dbReference type="Gene3D" id="3.40.50.1580">
    <property type="entry name" value="Nucleoside phosphorylase domain"/>
    <property type="match status" value="1"/>
</dbReference>
<dbReference type="HAMAP" id="MF_01684">
    <property type="entry name" value="Salvage_MtnN"/>
    <property type="match status" value="1"/>
</dbReference>
<dbReference type="InterPro" id="IPR010049">
    <property type="entry name" value="MTA_SAH_Nsdase"/>
</dbReference>
<dbReference type="InterPro" id="IPR000845">
    <property type="entry name" value="Nucleoside_phosphorylase_d"/>
</dbReference>
<dbReference type="InterPro" id="IPR035994">
    <property type="entry name" value="Nucleoside_phosphorylase_sf"/>
</dbReference>
<dbReference type="NCBIfam" id="TIGR01704">
    <property type="entry name" value="MTA_SAH-Nsdase"/>
    <property type="match status" value="1"/>
</dbReference>
<dbReference type="NCBIfam" id="NF004079">
    <property type="entry name" value="PRK05584.1"/>
    <property type="match status" value="1"/>
</dbReference>
<dbReference type="PANTHER" id="PTHR46832">
    <property type="entry name" value="5'-METHYLTHIOADENOSINE/S-ADENOSYLHOMOCYSTEINE NUCLEOSIDASE"/>
    <property type="match status" value="1"/>
</dbReference>
<dbReference type="PANTHER" id="PTHR46832:SF1">
    <property type="entry name" value="5'-METHYLTHIOADENOSINE_S-ADENOSYLHOMOCYSTEINE NUCLEOSIDASE"/>
    <property type="match status" value="1"/>
</dbReference>
<dbReference type="Pfam" id="PF01048">
    <property type="entry name" value="PNP_UDP_1"/>
    <property type="match status" value="1"/>
</dbReference>
<dbReference type="SUPFAM" id="SSF53167">
    <property type="entry name" value="Purine and uridine phosphorylases"/>
    <property type="match status" value="1"/>
</dbReference>